<keyword id="KW-0012">Acyltransferase</keyword>
<keyword id="KW-1185">Reference proteome</keyword>
<keyword id="KW-0808">Transferase</keyword>
<accession>Q54IU9</accession>
<name>ARY1_DICDI</name>
<comment type="catalytic activity">
    <reaction>
        <text>an arylamine + acetyl-CoA = an N-acetylarylamine + CoA</text>
        <dbReference type="Rhea" id="RHEA:16613"/>
        <dbReference type="ChEBI" id="CHEBI:13790"/>
        <dbReference type="ChEBI" id="CHEBI:50471"/>
        <dbReference type="ChEBI" id="CHEBI:57287"/>
        <dbReference type="ChEBI" id="CHEBI:57288"/>
        <dbReference type="EC" id="2.3.1.5"/>
    </reaction>
</comment>
<comment type="similarity">
    <text evidence="2">Belongs to the arylamine N-acetyltransferase family.</text>
</comment>
<protein>
    <recommendedName>
        <fullName>Probable arylamine N-acetyltransferase 1</fullName>
        <ecNumber>2.3.1.5</ecNumber>
    </recommendedName>
    <alternativeName>
        <fullName>Arylamide acetylase 1</fullName>
    </alternativeName>
    <alternativeName>
        <fullName>N-acetyltransferase type 1</fullName>
        <shortName>NAT-1</shortName>
    </alternativeName>
</protein>
<gene>
    <name type="ORF">DDB_G0288503</name>
</gene>
<proteinExistence type="inferred from homology"/>
<feature type="chain" id="PRO_0000327944" description="Probable arylamine N-acetyltransferase 1">
    <location>
        <begin position="1"/>
        <end position="325"/>
    </location>
</feature>
<feature type="active site" description="Acyl-thioester intermediate" evidence="1">
    <location>
        <position position="72"/>
    </location>
</feature>
<feature type="active site" evidence="1">
    <location>
        <position position="112"/>
    </location>
</feature>
<feature type="active site" evidence="1">
    <location>
        <position position="127"/>
    </location>
</feature>
<evidence type="ECO:0000250" key="1"/>
<evidence type="ECO:0000305" key="2"/>
<organism>
    <name type="scientific">Dictyostelium discoideum</name>
    <name type="common">Social amoeba</name>
    <dbReference type="NCBI Taxonomy" id="44689"/>
    <lineage>
        <taxon>Eukaryota</taxon>
        <taxon>Amoebozoa</taxon>
        <taxon>Evosea</taxon>
        <taxon>Eumycetozoa</taxon>
        <taxon>Dictyostelia</taxon>
        <taxon>Dictyosteliales</taxon>
        <taxon>Dictyosteliaceae</taxon>
        <taxon>Dictyostelium</taxon>
    </lineage>
</organism>
<dbReference type="EC" id="2.3.1.5"/>
<dbReference type="EMBL" id="AAFI02000112">
    <property type="protein sequence ID" value="EAL63200.1"/>
    <property type="molecule type" value="Genomic_DNA"/>
</dbReference>
<dbReference type="RefSeq" id="XP_636704.1">
    <property type="nucleotide sequence ID" value="XM_631612.1"/>
</dbReference>
<dbReference type="SMR" id="Q54IU9"/>
<dbReference type="FunCoup" id="Q54IU9">
    <property type="interactions" value="2"/>
</dbReference>
<dbReference type="PaxDb" id="44689-DDB0267112"/>
<dbReference type="EnsemblProtists" id="EAL63200">
    <property type="protein sequence ID" value="EAL63200"/>
    <property type="gene ID" value="DDB_G0288503"/>
</dbReference>
<dbReference type="GeneID" id="8626661"/>
<dbReference type="KEGG" id="ddi:DDB_G0288503"/>
<dbReference type="dictyBase" id="DDB_G0288503">
    <property type="gene designation" value="nat2"/>
</dbReference>
<dbReference type="VEuPathDB" id="AmoebaDB:DDB_G0288503"/>
<dbReference type="eggNOG" id="ENOG502RI6E">
    <property type="taxonomic scope" value="Eukaryota"/>
</dbReference>
<dbReference type="HOGENOM" id="CLU_049918_4_0_1"/>
<dbReference type="InParanoid" id="Q54IU9"/>
<dbReference type="PhylomeDB" id="Q54IU9"/>
<dbReference type="PRO" id="PR:Q54IU9"/>
<dbReference type="Proteomes" id="UP000002195">
    <property type="component" value="Chromosome 5"/>
</dbReference>
<dbReference type="GO" id="GO:0004060">
    <property type="term" value="F:arylamine N-acetyltransferase activity"/>
    <property type="evidence" value="ECO:0007669"/>
    <property type="project" value="UniProtKB-EC"/>
</dbReference>
<dbReference type="FunFam" id="3.30.2140.20:FF:000002">
    <property type="entry name" value="Arylamine N-acetyltransferase"/>
    <property type="match status" value="1"/>
</dbReference>
<dbReference type="Gene3D" id="3.30.2140.20">
    <property type="match status" value="1"/>
</dbReference>
<dbReference type="InterPro" id="IPR001447">
    <property type="entry name" value="Arylamine_N-AcTrfase"/>
</dbReference>
<dbReference type="InterPro" id="IPR053710">
    <property type="entry name" value="Arylamine_NAT_domain_sf"/>
</dbReference>
<dbReference type="InterPro" id="IPR038765">
    <property type="entry name" value="Papain-like_cys_pep_sf"/>
</dbReference>
<dbReference type="PANTHER" id="PTHR11786:SF9">
    <property type="entry name" value="ARYLAMINE N-ACETYLTRANSFERASE 1-RELATED"/>
    <property type="match status" value="1"/>
</dbReference>
<dbReference type="PANTHER" id="PTHR11786">
    <property type="entry name" value="N-HYDROXYARYLAMINE O-ACETYLTRANSFERASE"/>
    <property type="match status" value="1"/>
</dbReference>
<dbReference type="Pfam" id="PF00797">
    <property type="entry name" value="Acetyltransf_2"/>
    <property type="match status" value="1"/>
</dbReference>
<dbReference type="SUPFAM" id="SSF54001">
    <property type="entry name" value="Cysteine proteinases"/>
    <property type="match status" value="1"/>
</dbReference>
<sequence length="325" mass="37294">MNPFTDYQVQFFERIKLKPRIIESLDDISEVLVACSKVFTFENLDIISNTQEALTRKVLIKQVLINKQGGLCYKANTLLYYFLLDFGLNVHQTRATCENQESHSRWNIGHGHMINILNFENKLYVMDVAFGCNLSLRPVPITDDGSEVIESCIGLYRVIKRENIVAGVYHYTHILEHRKPDTYLIESAKNWVIGYAFDPLLICKNDGDDDDDDNNNNNNTHQTQIQQLVIDDPNKDFCVKPLATKLINNTDNNNNNNSIATLTLNSFTLTNCKTGEKIKTNFDNDNLFEQFNQHLISIFNLPPLKIIPQIFLNQTSNFPINNLNS</sequence>
<reference key="1">
    <citation type="journal article" date="2005" name="Nature">
        <title>The genome of the social amoeba Dictyostelium discoideum.</title>
        <authorList>
            <person name="Eichinger L."/>
            <person name="Pachebat J.A."/>
            <person name="Gloeckner G."/>
            <person name="Rajandream M.A."/>
            <person name="Sucgang R."/>
            <person name="Berriman M."/>
            <person name="Song J."/>
            <person name="Olsen R."/>
            <person name="Szafranski K."/>
            <person name="Xu Q."/>
            <person name="Tunggal B."/>
            <person name="Kummerfeld S."/>
            <person name="Madera M."/>
            <person name="Konfortov B.A."/>
            <person name="Rivero F."/>
            <person name="Bankier A.T."/>
            <person name="Lehmann R."/>
            <person name="Hamlin N."/>
            <person name="Davies R."/>
            <person name="Gaudet P."/>
            <person name="Fey P."/>
            <person name="Pilcher K."/>
            <person name="Chen G."/>
            <person name="Saunders D."/>
            <person name="Sodergren E.J."/>
            <person name="Davis P."/>
            <person name="Kerhornou A."/>
            <person name="Nie X."/>
            <person name="Hall N."/>
            <person name="Anjard C."/>
            <person name="Hemphill L."/>
            <person name="Bason N."/>
            <person name="Farbrother P."/>
            <person name="Desany B."/>
            <person name="Just E."/>
            <person name="Morio T."/>
            <person name="Rost R."/>
            <person name="Churcher C.M."/>
            <person name="Cooper J."/>
            <person name="Haydock S."/>
            <person name="van Driessche N."/>
            <person name="Cronin A."/>
            <person name="Goodhead I."/>
            <person name="Muzny D.M."/>
            <person name="Mourier T."/>
            <person name="Pain A."/>
            <person name="Lu M."/>
            <person name="Harper D."/>
            <person name="Lindsay R."/>
            <person name="Hauser H."/>
            <person name="James K.D."/>
            <person name="Quiles M."/>
            <person name="Madan Babu M."/>
            <person name="Saito T."/>
            <person name="Buchrieser C."/>
            <person name="Wardroper A."/>
            <person name="Felder M."/>
            <person name="Thangavelu M."/>
            <person name="Johnson D."/>
            <person name="Knights A."/>
            <person name="Loulseged H."/>
            <person name="Mungall K.L."/>
            <person name="Oliver K."/>
            <person name="Price C."/>
            <person name="Quail M.A."/>
            <person name="Urushihara H."/>
            <person name="Hernandez J."/>
            <person name="Rabbinowitsch E."/>
            <person name="Steffen D."/>
            <person name="Sanders M."/>
            <person name="Ma J."/>
            <person name="Kohara Y."/>
            <person name="Sharp S."/>
            <person name="Simmonds M.N."/>
            <person name="Spiegler S."/>
            <person name="Tivey A."/>
            <person name="Sugano S."/>
            <person name="White B."/>
            <person name="Walker D."/>
            <person name="Woodward J.R."/>
            <person name="Winckler T."/>
            <person name="Tanaka Y."/>
            <person name="Shaulsky G."/>
            <person name="Schleicher M."/>
            <person name="Weinstock G.M."/>
            <person name="Rosenthal A."/>
            <person name="Cox E.C."/>
            <person name="Chisholm R.L."/>
            <person name="Gibbs R.A."/>
            <person name="Loomis W.F."/>
            <person name="Platzer M."/>
            <person name="Kay R.R."/>
            <person name="Williams J.G."/>
            <person name="Dear P.H."/>
            <person name="Noegel A.A."/>
            <person name="Barrell B.G."/>
            <person name="Kuspa A."/>
        </authorList>
    </citation>
    <scope>NUCLEOTIDE SEQUENCE [LARGE SCALE GENOMIC DNA]</scope>
    <source>
        <strain>AX4</strain>
    </source>
</reference>